<feature type="chain" id="PRO_0000198810" description="3',5'-cyclic-AMP phosphodiesterase 4B">
    <location>
        <begin position="1"/>
        <end position="736"/>
    </location>
</feature>
<feature type="domain" description="PDEase" evidence="3">
    <location>
        <begin position="330"/>
        <end position="659"/>
    </location>
</feature>
<feature type="region of interest" description="Disordered" evidence="4">
    <location>
        <begin position="51"/>
        <end position="77"/>
    </location>
</feature>
<feature type="region of interest" description="Disordered" evidence="4">
    <location>
        <begin position="96"/>
        <end position="116"/>
    </location>
</feature>
<feature type="region of interest" description="Disordered" evidence="4">
    <location>
        <begin position="685"/>
        <end position="736"/>
    </location>
</feature>
<feature type="active site" description="Proton donor" evidence="1">
    <location>
        <position position="406"/>
    </location>
</feature>
<feature type="binding site" evidence="2">
    <location>
        <position position="406"/>
    </location>
    <ligand>
        <name>3',5'-cyclic AMP</name>
        <dbReference type="ChEBI" id="CHEBI:58165"/>
    </ligand>
</feature>
<feature type="binding site" evidence="1">
    <location>
        <position position="406"/>
    </location>
    <ligand>
        <name>AMP</name>
        <dbReference type="ChEBI" id="CHEBI:456215"/>
    </ligand>
</feature>
<feature type="binding site" evidence="1">
    <location>
        <position position="410"/>
    </location>
    <ligand>
        <name>AMP</name>
        <dbReference type="ChEBI" id="CHEBI:456215"/>
    </ligand>
</feature>
<feature type="binding site" evidence="1">
    <location>
        <position position="410"/>
    </location>
    <ligand>
        <name>Zn(2+)</name>
        <dbReference type="ChEBI" id="CHEBI:29105"/>
        <label>1</label>
    </ligand>
</feature>
<feature type="binding site" evidence="1">
    <location>
        <position position="446"/>
    </location>
    <ligand>
        <name>Zn(2+)</name>
        <dbReference type="ChEBI" id="CHEBI:29105"/>
        <label>1</label>
    </ligand>
</feature>
<feature type="binding site" evidence="1">
    <location>
        <position position="447"/>
    </location>
    <ligand>
        <name>AMP</name>
        <dbReference type="ChEBI" id="CHEBI:456215"/>
    </ligand>
</feature>
<feature type="binding site" evidence="1">
    <location>
        <position position="447"/>
    </location>
    <ligand>
        <name>Mg(2+)</name>
        <dbReference type="ChEBI" id="CHEBI:18420"/>
    </ligand>
</feature>
<feature type="binding site" evidence="1">
    <location>
        <position position="447"/>
    </location>
    <ligand>
        <name>Mn(2+)</name>
        <dbReference type="ChEBI" id="CHEBI:29035"/>
    </ligand>
</feature>
<feature type="binding site" evidence="1">
    <location>
        <position position="447"/>
    </location>
    <ligand>
        <name>Zn(2+)</name>
        <dbReference type="ChEBI" id="CHEBI:29105"/>
        <label>1</label>
    </ligand>
</feature>
<feature type="binding site" evidence="1">
    <location>
        <position position="447"/>
    </location>
    <ligand>
        <name>Zn(2+)</name>
        <dbReference type="ChEBI" id="CHEBI:29105"/>
        <label>2</label>
    </ligand>
</feature>
<feature type="binding site" evidence="1">
    <location>
        <position position="564"/>
    </location>
    <ligand>
        <name>AMP</name>
        <dbReference type="ChEBI" id="CHEBI:456215"/>
    </ligand>
</feature>
<feature type="binding site" evidence="1">
    <location>
        <position position="564"/>
    </location>
    <ligand>
        <name>Zn(2+)</name>
        <dbReference type="ChEBI" id="CHEBI:29105"/>
        <label>1</label>
    </ligand>
</feature>
<feature type="binding site" evidence="2">
    <location>
        <position position="615"/>
    </location>
    <ligand>
        <name>3',5'-cyclic AMP</name>
        <dbReference type="ChEBI" id="CHEBI:58165"/>
    </ligand>
</feature>
<feature type="binding site" evidence="1">
    <location>
        <position position="615"/>
    </location>
    <ligand>
        <name>AMP</name>
        <dbReference type="ChEBI" id="CHEBI:456215"/>
    </ligand>
</feature>
<feature type="binding site" evidence="2">
    <location>
        <position position="618"/>
    </location>
    <ligand>
        <name>3',5'-cyclic AMP</name>
        <dbReference type="ChEBI" id="CHEBI:58165"/>
    </ligand>
</feature>
<feature type="binding site" evidence="1">
    <location>
        <position position="618"/>
    </location>
    <ligand>
        <name>AMP</name>
        <dbReference type="ChEBI" id="CHEBI:456215"/>
    </ligand>
</feature>
<feature type="modified residue" description="Phosphoserine" evidence="17">
    <location>
        <position position="290"/>
    </location>
</feature>
<feature type="modified residue" description="Phosphoserine" evidence="17">
    <location>
        <position position="659"/>
    </location>
</feature>
<feature type="modified residue" description="Phosphoserine" evidence="17">
    <location>
        <position position="661"/>
    </location>
</feature>
<feature type="splice variant" id="VSP_026678" description="In isoform 2." evidence="10 11 12">
    <location>
        <begin position="1"/>
        <end position="172"/>
    </location>
</feature>
<feature type="splice variant" id="VSP_026679" description="In isoform 3 and isoform 5." evidence="9 13">
    <original>MKKSRSVMAVTADDNLKDYFECSLSKSYSSSSYTLGIDLWRGRRCCSGNLQLPPLSQRQSERARTPEGDGISRPTTLPLTTLPSIAITTVSQE</original>
    <variation>MTAKNSSKELPASESEVCIKTFKEQMRLELELPKLPGNRPTSPKISPRSSPRNSPCFFRKLLVNKSIRQRRRFTVAHT</variation>
    <location>
        <begin position="1"/>
        <end position="93"/>
    </location>
</feature>
<feature type="splice variant" id="VSP_026680" description="In isoform 4." evidence="8">
    <original>MKKSRSVMAVTADDNLKDYFECSLSKSYSSSSYTLGIDLWRGRRCCSGNLQLPPLSQRQSERARTPEGDGISRPTTLPLTTLPSIAITTVSQE</original>
    <variation>MLHVNDLPPPRRHSWI</variation>
    <location>
        <begin position="1"/>
        <end position="93"/>
    </location>
</feature>
<feature type="splice variant" id="VSP_004573" description="In isoform 2." evidence="10 11 12">
    <original>LASLRIVRNNFTLLTNLHGAPNKRSPAASQAPVTRVSLQ</original>
    <variation>MKEQGGTVSGAGSSRGGGDSAMASLQPLQPNYLSVCLFA</variation>
    <location>
        <begin position="173"/>
        <end position="211"/>
    </location>
</feature>
<feature type="splice variant" id="VSP_026681" description="In isoform 5." evidence="9">
    <original>VIDPENRDSLEETDIDIATEDKSLIDT</original>
    <variation>KPCHAANGLALPVGGGNAASTQPRCGHV</variation>
    <location>
        <begin position="710"/>
        <end position="736"/>
    </location>
</feature>
<feature type="sequence conflict" description="In Ref. 5; AAL31763/AAL31764 and 6; AAH85704." evidence="14" ref="5 6">
    <original>I</original>
    <variation>S</variation>
    <location>
        <position position="178"/>
    </location>
</feature>
<feature type="sequence conflict" description="In Ref. 3; AAA18926." evidence="14" ref="3">
    <original>T</original>
    <variation>S</variation>
    <location>
        <position position="531"/>
    </location>
</feature>
<feature type="modified residue" description="Phosphoserine" evidence="5">
    <location sequence="P14646-4">
        <position position="56"/>
    </location>
</feature>
<comment type="function">
    <text evidence="5">Hydrolyzes the second messenger cAMP, which is a key regulator of many important physiological processes.</text>
</comment>
<comment type="catalytic activity">
    <reaction evidence="5">
        <text>3',5'-cyclic AMP + H2O = AMP + H(+)</text>
        <dbReference type="Rhea" id="RHEA:25277"/>
        <dbReference type="ChEBI" id="CHEBI:15377"/>
        <dbReference type="ChEBI" id="CHEBI:15378"/>
        <dbReference type="ChEBI" id="CHEBI:58165"/>
        <dbReference type="ChEBI" id="CHEBI:456215"/>
        <dbReference type="EC" id="3.1.4.53"/>
    </reaction>
    <physiologicalReaction direction="left-to-right" evidence="15">
        <dbReference type="Rhea" id="RHEA:25278"/>
    </physiologicalReaction>
</comment>
<comment type="cofactor">
    <cofactor evidence="1">
        <name>Zn(2+)</name>
        <dbReference type="ChEBI" id="CHEBI:29105"/>
    </cofactor>
    <text evidence="1">Binds 2 divalent metal cations per subunit. Site 1 may preferentially bind zinc ions.</text>
</comment>
<comment type="cofactor">
    <cofactor evidence="1">
        <name>Mg(2+)</name>
        <dbReference type="ChEBI" id="CHEBI:18420"/>
    </cofactor>
    <cofactor evidence="1">
        <name>Mn(2+)</name>
        <dbReference type="ChEBI" id="CHEBI:29035"/>
    </cofactor>
    <text evidence="1">Binds 2 divalent metal cations per subunit. Site 2 has a preference for magnesium and/or manganese ions.</text>
</comment>
<comment type="activity regulation">
    <text evidence="1">Inhibited by rolipram.</text>
</comment>
<comment type="biophysicochemical properties">
    <molecule>Isoform 4</molecule>
    <kinetics>
        <KM evidence="5">5.4 uM for cAMP</KM>
        <text evidence="5">Vmax values for isoforms 2, 3 and 4 relative to isoform 1 are 3.8, 1.6 and 2.1.</text>
    </kinetics>
</comment>
<comment type="pathway">
    <text evidence="15">Purine metabolism; 3',5'-cyclic AMP degradation; AMP from 3',5'-cyclic AMP: step 1/1.</text>
</comment>
<comment type="subunit">
    <molecule>Isoform 5</molecule>
    <text evidence="1">Interacts with DISC1.</text>
</comment>
<comment type="subcellular location">
    <molecule>Isoform 4</molecule>
    <subcellularLocation>
        <location evidence="1">Cytoplasm</location>
    </subcellularLocation>
    <subcellularLocation>
        <location evidence="1">Cell membrane</location>
    </subcellularLocation>
</comment>
<comment type="alternative products">
    <event type="alternative splicing"/>
    <isoform>
        <id>P14646-3</id>
        <name>1</name>
        <name evidence="8">PDE4B1</name>
        <sequence type="displayed"/>
    </isoform>
    <isoform>
        <id>P14646-2</id>
        <name>2</name>
        <name evidence="8">PDE4B2</name>
        <sequence type="described" ref="VSP_026678 VSP_004573"/>
    </isoform>
    <isoform>
        <id>P14646-1</id>
        <name>3</name>
        <name evidence="8">PDE4B3</name>
        <sequence type="described" ref="VSP_026679"/>
    </isoform>
    <isoform>
        <id>P14646-4</id>
        <name>4</name>
        <name evidence="8">PDE4B4</name>
        <sequence type="described" ref="VSP_026680"/>
    </isoform>
    <isoform>
        <id>P14646-5</id>
        <name>5</name>
        <sequence type="described" ref="VSP_026679 VSP_026681"/>
    </isoform>
</comment>
<comment type="tissue specificity">
    <text evidence="5 7">Widely expressed.</text>
</comment>
<comment type="tissue specificity">
    <molecule>Isoform 3</molecule>
    <text evidence="5">Expressed in brain, heart, lung and liver.</text>
</comment>
<comment type="tissue specificity">
    <molecule>Isoform 4</molecule>
    <text evidence="5">Expressed in liver and brain.</text>
</comment>
<comment type="induction">
    <text evidence="6 7">In Sertoli cells, induced by FSH. In the pineal gland, exhibits night/day variations with a 7-fold increased expression at night. Up-regulation is due to a large degree to the release of norepinephrine from nerve terminals in the pineal gland and cAMP signaling pathway.</text>
</comment>
<comment type="miscellaneous">
    <molecule>Isoform 4</molecule>
    <text evidence="14">Activated by phosphorylation at Ser-56. Mutagenesis of Ser-56 abolishes activation.</text>
</comment>
<comment type="similarity">
    <text evidence="14">Belongs to the cyclic nucleotide phosphodiesterase family. PDE4 subfamily.</text>
</comment>
<proteinExistence type="evidence at protein level"/>
<reference key="1">
    <citation type="journal article" date="1991" name="J. Biol. Chem.">
        <title>Properties and hormonal regulation of two structurally related cAMP phosphodiesterases from the rat Sertoli cell.</title>
        <authorList>
            <person name="Swinnen J.V."/>
            <person name="Tsikalas K.E."/>
            <person name="Conti M."/>
        </authorList>
    </citation>
    <scope>NUCLEOTIDE SEQUENCE [MRNA] (ISOFORM 2)</scope>
    <scope>INDUCTION</scope>
    <source>
        <tissue>Sertoli cell</tissue>
    </source>
</reference>
<reference key="2">
    <citation type="journal article" date="1994" name="Gene">
        <title>Differential CNS expression of alternative mRNA isoforms of the mammalian genes encoding cAMP-specific phosphodiesterases.</title>
        <authorList>
            <person name="Bolger G.B."/>
            <person name="Rodgers L."/>
            <person name="Riggs M."/>
        </authorList>
    </citation>
    <scope>NUCLEOTIDE SEQUENCE [MRNA] (ISOFORM 2)</scope>
</reference>
<reference key="3">
    <citation type="journal article" date="1994" name="J. Biol. Chem.">
        <title>Structure of two rat genes coding for closely related rolipram-sensitive cAMP phosphodiesterases. Multiple mRNA variants originate from alternative splicing and multiple start sites.</title>
        <authorList>
            <person name="Monaco L."/>
            <person name="Vicini E."/>
            <person name="Conti M."/>
        </authorList>
    </citation>
    <scope>NUCLEOTIDE SEQUENCE [MRNA] (ISOFORM 2)</scope>
    <source>
        <strain>Wistar</strain>
    </source>
</reference>
<reference key="4">
    <citation type="journal article" date="1997" name="Biochem. J.">
        <title>Molecular cloning and transient expression in COS7 cells of a novel human PDE4B cAMP-specific phosphodiesterase, HSPDE4B3.</title>
        <authorList>
            <person name="Huston E."/>
            <person name="Lumb S."/>
            <person name="Russell A."/>
            <person name="Catterall C."/>
            <person name="Ross A.H."/>
            <person name="Steele M.R."/>
            <person name="Bolger G.B."/>
            <person name="Perry M.J."/>
            <person name="Owens R.J."/>
            <person name="Houslay M.D."/>
        </authorList>
    </citation>
    <scope>NUCLEOTIDE SEQUENCE [MRNA] (ISOFORM 3)</scope>
    <source>
        <tissue>Olfactory bulb</tissue>
    </source>
</reference>
<reference key="5">
    <citation type="journal article" date="2003" name="Biochem. J.">
        <title>Molecular cloning and subcellular distribution of the novel PDE4B4 cAMP-specific phosphodiesterase isoform.</title>
        <authorList>
            <person name="Shepherd M."/>
            <person name="McSorley T."/>
            <person name="Olsen A.E."/>
            <person name="Johnston L.A."/>
            <person name="Thomson N.C."/>
            <person name="Baillie G.S."/>
            <person name="Houslay M.D."/>
            <person name="Bolger G.B."/>
        </authorList>
    </citation>
    <scope>NUCLEOTIDE SEQUENCE [MRNA] (ISOFORMS 1 AND 4)</scope>
    <scope>BIOPHYSICOCHEMICAL PROPERTIES</scope>
    <scope>PHOSPHORYLATION AT SER-56 (ISOFORM 4)</scope>
    <scope>TISSUE SPECIFICITY</scope>
    <scope>CATALYTIC ACTIVITY</scope>
    <scope>FUNCTION</scope>
    <source>
        <strain>Sprague-Dawley</strain>
        <tissue>Brain cortex</tissue>
    </source>
</reference>
<reference key="6">
    <citation type="journal article" date="2004" name="Genome Res.">
        <title>The status, quality, and expansion of the NIH full-length cDNA project: the Mammalian Gene Collection (MGC).</title>
        <authorList>
            <consortium name="The MGC Project Team"/>
        </authorList>
    </citation>
    <scope>NUCLEOTIDE SEQUENCE [LARGE SCALE MRNA] (ISOFORM 5)</scope>
    <source>
        <tissue>Heart</tissue>
    </source>
</reference>
<reference key="7">
    <citation type="journal article" date="1989" name="Proc. Natl. Acad. Sci. U.S.A.">
        <title>Isolation and characterization of a mammalian gene encoding a high-affinity cAMP phosphodiesterase.</title>
        <authorList>
            <person name="Colicelli J."/>
            <person name="Birchmeier C."/>
            <person name="Michaeli T."/>
            <person name="O'Neill K."/>
            <person name="Riggs M."/>
            <person name="Wigler M."/>
        </authorList>
    </citation>
    <scope>NUCLEOTIDE SEQUENCE [MRNA] OF 175-736</scope>
    <source>
        <tissue>Brain</tissue>
    </source>
</reference>
<reference key="8">
    <citation type="journal article" date="1989" name="Proc. Natl. Acad. Sci. U.S.A.">
        <title>Molecular cloning of rat homologues of the Drosophila melanogaster dunce cAMP phosphodiesterase: evidence for a family of genes.</title>
        <authorList>
            <person name="Swinnen J.V."/>
            <person name="Joseph D.R."/>
            <person name="Conti M."/>
        </authorList>
    </citation>
    <scope>NUCLEOTIDE SEQUENCE [MRNA] OF 304-663</scope>
    <source>
        <tissue>Testis</tissue>
    </source>
</reference>
<reference key="9">
    <citation type="journal article" date="2009" name="J. Biol. Chem.">
        <title>Night/day changes in pineal expression of &gt;600 genes: central role of adrenergic/cAMP signaling.</title>
        <authorList>
            <person name="Bailey M.J."/>
            <person name="Coon S.L."/>
            <person name="Carter D.A."/>
            <person name="Humphries A."/>
            <person name="Kim J.S."/>
            <person name="Shi Q."/>
            <person name="Gaildrat P."/>
            <person name="Morin F."/>
            <person name="Ganguly S."/>
            <person name="Hogenesch J.B."/>
            <person name="Weller J.L."/>
            <person name="Rath M.F."/>
            <person name="Moller M."/>
            <person name="Baler R."/>
            <person name="Sugden D."/>
            <person name="Rangel Z.G."/>
            <person name="Munson P.J."/>
            <person name="Klein D.C."/>
        </authorList>
    </citation>
    <scope>TISSUE SPECIFICITY</scope>
    <scope>INDUCTION</scope>
</reference>
<reference key="10">
    <citation type="journal article" date="2012" name="Nat. Commun.">
        <title>Quantitative maps of protein phosphorylation sites across 14 different rat organs and tissues.</title>
        <authorList>
            <person name="Lundby A."/>
            <person name="Secher A."/>
            <person name="Lage K."/>
            <person name="Nordsborg N.B."/>
            <person name="Dmytriyev A."/>
            <person name="Lundby C."/>
            <person name="Olsen J.V."/>
        </authorList>
    </citation>
    <scope>PHOSPHORYLATION [LARGE SCALE ANALYSIS] AT SER-290; SER-659 AND SER-661</scope>
    <scope>IDENTIFICATION BY MASS SPECTROMETRY [LARGE SCALE ANALYSIS]</scope>
</reference>
<accession>P14646</accession>
<accession>Q5RKL0</accession>
<accession>Q8VD81</accession>
<accession>Q8VD82</accession>
<evidence type="ECO:0000250" key="1">
    <source>
        <dbReference type="UniProtKB" id="Q07343"/>
    </source>
</evidence>
<evidence type="ECO:0000250" key="2">
    <source>
        <dbReference type="UniProtKB" id="Q08499"/>
    </source>
</evidence>
<evidence type="ECO:0000255" key="3">
    <source>
        <dbReference type="PROSITE-ProRule" id="PRU01192"/>
    </source>
</evidence>
<evidence type="ECO:0000256" key="4">
    <source>
        <dbReference type="SAM" id="MobiDB-lite"/>
    </source>
</evidence>
<evidence type="ECO:0000269" key="5">
    <source>
    </source>
</evidence>
<evidence type="ECO:0000269" key="6">
    <source>
    </source>
</evidence>
<evidence type="ECO:0000269" key="7">
    <source>
    </source>
</evidence>
<evidence type="ECO:0000303" key="8">
    <source>
    </source>
</evidence>
<evidence type="ECO:0000303" key="9">
    <source>
    </source>
</evidence>
<evidence type="ECO:0000303" key="10">
    <source>
    </source>
</evidence>
<evidence type="ECO:0000303" key="11">
    <source>
    </source>
</evidence>
<evidence type="ECO:0000303" key="12">
    <source>
    </source>
</evidence>
<evidence type="ECO:0000303" key="13">
    <source>
    </source>
</evidence>
<evidence type="ECO:0000305" key="14"/>
<evidence type="ECO:0000305" key="15">
    <source>
    </source>
</evidence>
<evidence type="ECO:0000312" key="16">
    <source>
        <dbReference type="RGD" id="3280"/>
    </source>
</evidence>
<evidence type="ECO:0007744" key="17">
    <source>
    </source>
</evidence>
<name>PDE4B_RAT</name>
<dbReference type="EC" id="3.1.4.53" evidence="5"/>
<dbReference type="EMBL" id="L27058">
    <property type="protein sequence ID" value="AAA74478.1"/>
    <property type="molecule type" value="mRNA"/>
</dbReference>
<dbReference type="EMBL" id="U01291">
    <property type="protein sequence ID" value="AAA18926.1"/>
    <property type="molecule type" value="Unassigned_DNA"/>
</dbReference>
<dbReference type="EMBL" id="U01289">
    <property type="protein sequence ID" value="AAA18926.1"/>
    <property type="status" value="JOINED"/>
    <property type="molecule type" value="Unassigned_DNA"/>
</dbReference>
<dbReference type="EMBL" id="U01293">
    <property type="protein sequence ID" value="AAA18926.1"/>
    <property type="status" value="JOINED"/>
    <property type="molecule type" value="Unassigned_DNA"/>
</dbReference>
<dbReference type="EMBL" id="U01294">
    <property type="protein sequence ID" value="AAA18926.1"/>
    <property type="status" value="JOINED"/>
    <property type="molecule type" value="Unassigned_DNA"/>
</dbReference>
<dbReference type="EMBL" id="U01295">
    <property type="protein sequence ID" value="AAA18926.1"/>
    <property type="status" value="JOINED"/>
    <property type="molecule type" value="Unassigned_DNA"/>
</dbReference>
<dbReference type="EMBL" id="U01296">
    <property type="protein sequence ID" value="AAA18926.1"/>
    <property type="status" value="JOINED"/>
    <property type="molecule type" value="Unassigned_DNA"/>
</dbReference>
<dbReference type="EMBL" id="U01297">
    <property type="protein sequence ID" value="AAA18926.1"/>
    <property type="status" value="JOINED"/>
    <property type="molecule type" value="Unassigned_DNA"/>
</dbReference>
<dbReference type="EMBL" id="U01298">
    <property type="protein sequence ID" value="AAA18926.1"/>
    <property type="status" value="JOINED"/>
    <property type="molecule type" value="Unassigned_DNA"/>
</dbReference>
<dbReference type="EMBL" id="U01290">
    <property type="protein sequence ID" value="AAA18926.1"/>
    <property type="status" value="JOINED"/>
    <property type="molecule type" value="Unassigned_DNA"/>
</dbReference>
<dbReference type="EMBL" id="U95748">
    <property type="protein sequence ID" value="AAB96560.1"/>
    <property type="molecule type" value="mRNA"/>
</dbReference>
<dbReference type="EMBL" id="AF202732">
    <property type="protein sequence ID" value="AAL31763.1"/>
    <property type="molecule type" value="mRNA"/>
</dbReference>
<dbReference type="EMBL" id="AF202733">
    <property type="protein sequence ID" value="AAL31764.1"/>
    <property type="molecule type" value="mRNA"/>
</dbReference>
<dbReference type="EMBL" id="BC085704">
    <property type="protein sequence ID" value="AAH85704.1"/>
    <property type="molecule type" value="mRNA"/>
</dbReference>
<dbReference type="EMBL" id="J04563">
    <property type="protein sequence ID" value="AAA66039.1"/>
    <property type="molecule type" value="mRNA"/>
</dbReference>
<dbReference type="EMBL" id="M25350">
    <property type="protein sequence ID" value="AAA41846.1"/>
    <property type="molecule type" value="mRNA"/>
</dbReference>
<dbReference type="EMBL" id="M28413">
    <property type="protein sequence ID" value="AAA41824.1"/>
    <property type="molecule type" value="mRNA"/>
</dbReference>
<dbReference type="PIR" id="A40949">
    <property type="entry name" value="A40949"/>
</dbReference>
<dbReference type="PIR" id="I59143">
    <property type="entry name" value="I59143"/>
</dbReference>
<dbReference type="RefSeq" id="NP_058727.2">
    <property type="nucleotide sequence ID" value="NM_017031.2"/>
</dbReference>
<dbReference type="SMR" id="P14646"/>
<dbReference type="BioGRID" id="246764">
    <property type="interactions" value="2"/>
</dbReference>
<dbReference type="FunCoup" id="P14646">
    <property type="interactions" value="2035"/>
</dbReference>
<dbReference type="STRING" id="10116.ENSRNOP00000008278"/>
<dbReference type="BindingDB" id="P14646"/>
<dbReference type="ChEMBL" id="CHEMBL3382"/>
<dbReference type="DrugCentral" id="P14646"/>
<dbReference type="iPTMnet" id="P14646"/>
<dbReference type="PhosphoSitePlus" id="P14646"/>
<dbReference type="PaxDb" id="10116-ENSRNOP00000007738"/>
<dbReference type="GeneID" id="24626"/>
<dbReference type="KEGG" id="rno:24626"/>
<dbReference type="UCSC" id="RGD:3280">
    <molecule id="P14646-3"/>
    <property type="organism name" value="rat"/>
</dbReference>
<dbReference type="AGR" id="RGD:3280"/>
<dbReference type="CTD" id="5142"/>
<dbReference type="RGD" id="3280">
    <property type="gene designation" value="Pde4b"/>
</dbReference>
<dbReference type="VEuPathDB" id="HostDB:ENSRNOG00000005905"/>
<dbReference type="eggNOG" id="KOG3689">
    <property type="taxonomic scope" value="Eukaryota"/>
</dbReference>
<dbReference type="InParanoid" id="P14646"/>
<dbReference type="PhylomeDB" id="P14646"/>
<dbReference type="TreeFam" id="TF314638"/>
<dbReference type="BRENDA" id="3.1.4.53">
    <property type="organism ID" value="5301"/>
</dbReference>
<dbReference type="Reactome" id="R-RNO-180024">
    <property type="pathway name" value="DARPP-32 events"/>
</dbReference>
<dbReference type="SABIO-RK" id="P14646"/>
<dbReference type="UniPathway" id="UPA00762">
    <property type="reaction ID" value="UER00747"/>
</dbReference>
<dbReference type="PRO" id="PR:P14646"/>
<dbReference type="Proteomes" id="UP000002494">
    <property type="component" value="Chromosome 5"/>
</dbReference>
<dbReference type="Bgee" id="ENSRNOG00000005905">
    <property type="expression patterns" value="Expressed in frontal cortex and 20 other cell types or tissues"/>
</dbReference>
<dbReference type="ExpressionAtlas" id="P14646">
    <property type="expression patterns" value="baseline and differential"/>
</dbReference>
<dbReference type="GO" id="GO:0071944">
    <property type="term" value="C:cell periphery"/>
    <property type="evidence" value="ECO:0000266"/>
    <property type="project" value="RGD"/>
</dbReference>
<dbReference type="GO" id="GO:0005813">
    <property type="term" value="C:centrosome"/>
    <property type="evidence" value="ECO:0000266"/>
    <property type="project" value="RGD"/>
</dbReference>
<dbReference type="GO" id="GO:0005829">
    <property type="term" value="C:cytosol"/>
    <property type="evidence" value="ECO:0000266"/>
    <property type="project" value="RGD"/>
</dbReference>
<dbReference type="GO" id="GO:0043197">
    <property type="term" value="C:dendritic spine"/>
    <property type="evidence" value="ECO:0000266"/>
    <property type="project" value="RGD"/>
</dbReference>
<dbReference type="GO" id="GO:0060076">
    <property type="term" value="C:excitatory synapse"/>
    <property type="evidence" value="ECO:0000266"/>
    <property type="project" value="RGD"/>
</dbReference>
<dbReference type="GO" id="GO:0000930">
    <property type="term" value="C:gamma-tubulin complex"/>
    <property type="evidence" value="ECO:0000266"/>
    <property type="project" value="RGD"/>
</dbReference>
<dbReference type="GO" id="GO:0016020">
    <property type="term" value="C:membrane"/>
    <property type="evidence" value="ECO:0000266"/>
    <property type="project" value="RGD"/>
</dbReference>
<dbReference type="GO" id="GO:0048471">
    <property type="term" value="C:perinuclear region of cytoplasm"/>
    <property type="evidence" value="ECO:0000314"/>
    <property type="project" value="RGD"/>
</dbReference>
<dbReference type="GO" id="GO:0005886">
    <property type="term" value="C:plasma membrane"/>
    <property type="evidence" value="ECO:0007669"/>
    <property type="project" value="UniProtKB-SubCell"/>
</dbReference>
<dbReference type="GO" id="GO:0014069">
    <property type="term" value="C:postsynaptic density"/>
    <property type="evidence" value="ECO:0000266"/>
    <property type="project" value="RGD"/>
</dbReference>
<dbReference type="GO" id="GO:0008021">
    <property type="term" value="C:synaptic vesicle"/>
    <property type="evidence" value="ECO:0000266"/>
    <property type="project" value="RGD"/>
</dbReference>
<dbReference type="GO" id="GO:0004115">
    <property type="term" value="F:3',5'-cyclic-AMP phosphodiesterase activity"/>
    <property type="evidence" value="ECO:0000314"/>
    <property type="project" value="RGD"/>
</dbReference>
<dbReference type="GO" id="GO:0047555">
    <property type="term" value="F:3',5'-cyclic-GMP phosphodiesterase activity"/>
    <property type="evidence" value="ECO:0000318"/>
    <property type="project" value="GO_Central"/>
</dbReference>
<dbReference type="GO" id="GO:0030552">
    <property type="term" value="F:cAMP binding"/>
    <property type="evidence" value="ECO:0000266"/>
    <property type="project" value="RGD"/>
</dbReference>
<dbReference type="GO" id="GO:0043015">
    <property type="term" value="F:gamma-tubulin binding"/>
    <property type="evidence" value="ECO:0000266"/>
    <property type="project" value="RGD"/>
</dbReference>
<dbReference type="GO" id="GO:0046872">
    <property type="term" value="F:metal ion binding"/>
    <property type="evidence" value="ECO:0007669"/>
    <property type="project" value="UniProtKB-KW"/>
</dbReference>
<dbReference type="GO" id="GO:0006198">
    <property type="term" value="P:cAMP catabolic process"/>
    <property type="evidence" value="ECO:0007669"/>
    <property type="project" value="UniProtKB-UniPathway"/>
</dbReference>
<dbReference type="GO" id="GO:0019933">
    <property type="term" value="P:cAMP-mediated signaling"/>
    <property type="evidence" value="ECO:0000318"/>
    <property type="project" value="GO_Central"/>
</dbReference>
<dbReference type="GO" id="GO:0071222">
    <property type="term" value="P:cellular response to lipopolysaccharide"/>
    <property type="evidence" value="ECO:0000266"/>
    <property type="project" value="RGD"/>
</dbReference>
<dbReference type="GO" id="GO:0071466">
    <property type="term" value="P:cellular response to xenobiotic stimulus"/>
    <property type="evidence" value="ECO:0000266"/>
    <property type="project" value="RGD"/>
</dbReference>
<dbReference type="GO" id="GO:0050900">
    <property type="term" value="P:leukocyte migration"/>
    <property type="evidence" value="ECO:0000266"/>
    <property type="project" value="RGD"/>
</dbReference>
<dbReference type="GO" id="GO:0030593">
    <property type="term" value="P:neutrophil chemotaxis"/>
    <property type="evidence" value="ECO:0000266"/>
    <property type="project" value="RGD"/>
</dbReference>
<dbReference type="GO" id="GO:0001780">
    <property type="term" value="P:neutrophil homeostasis"/>
    <property type="evidence" value="ECO:0000266"/>
    <property type="project" value="RGD"/>
</dbReference>
<dbReference type="GO" id="GO:0032743">
    <property type="term" value="P:positive regulation of interleukin-2 production"/>
    <property type="evidence" value="ECO:0000266"/>
    <property type="project" value="RGD"/>
</dbReference>
<dbReference type="GO" id="GO:0032729">
    <property type="term" value="P:positive regulation of type II interferon production"/>
    <property type="evidence" value="ECO:0000266"/>
    <property type="project" value="RGD"/>
</dbReference>
<dbReference type="GO" id="GO:0050852">
    <property type="term" value="P:T cell receptor signaling pathway"/>
    <property type="evidence" value="ECO:0000266"/>
    <property type="project" value="RGD"/>
</dbReference>
<dbReference type="CDD" id="cd00077">
    <property type="entry name" value="HDc"/>
    <property type="match status" value="1"/>
</dbReference>
<dbReference type="FunFam" id="1.10.1300.10:FF:000001">
    <property type="entry name" value="Phosphodiesterase"/>
    <property type="match status" value="1"/>
</dbReference>
<dbReference type="Gene3D" id="1.10.1300.10">
    <property type="entry name" value="3'5'-cyclic nucleotide phosphodiesterase, catalytic domain"/>
    <property type="match status" value="1"/>
</dbReference>
<dbReference type="InterPro" id="IPR003607">
    <property type="entry name" value="HD/PDEase_dom"/>
</dbReference>
<dbReference type="InterPro" id="IPR040844">
    <property type="entry name" value="PDE4_UCR"/>
</dbReference>
<dbReference type="InterPro" id="IPR023088">
    <property type="entry name" value="PDEase"/>
</dbReference>
<dbReference type="InterPro" id="IPR002073">
    <property type="entry name" value="PDEase_catalytic_dom"/>
</dbReference>
<dbReference type="InterPro" id="IPR036971">
    <property type="entry name" value="PDEase_catalytic_dom_sf"/>
</dbReference>
<dbReference type="InterPro" id="IPR023174">
    <property type="entry name" value="PDEase_CS"/>
</dbReference>
<dbReference type="PANTHER" id="PTHR11347">
    <property type="entry name" value="CYCLIC NUCLEOTIDE PHOSPHODIESTERASE"/>
    <property type="match status" value="1"/>
</dbReference>
<dbReference type="Pfam" id="PF18100">
    <property type="entry name" value="PDE4_UCR"/>
    <property type="match status" value="1"/>
</dbReference>
<dbReference type="Pfam" id="PF00233">
    <property type="entry name" value="PDEase_I"/>
    <property type="match status" value="1"/>
</dbReference>
<dbReference type="PRINTS" id="PR00387">
    <property type="entry name" value="PDIESTERASE1"/>
</dbReference>
<dbReference type="SMART" id="SM00471">
    <property type="entry name" value="HDc"/>
    <property type="match status" value="1"/>
</dbReference>
<dbReference type="SUPFAM" id="SSF109604">
    <property type="entry name" value="HD-domain/PDEase-like"/>
    <property type="match status" value="1"/>
</dbReference>
<dbReference type="PROSITE" id="PS00126">
    <property type="entry name" value="PDEASE_I_1"/>
    <property type="match status" value="1"/>
</dbReference>
<dbReference type="PROSITE" id="PS51845">
    <property type="entry name" value="PDEASE_I_2"/>
    <property type="match status" value="1"/>
</dbReference>
<protein>
    <recommendedName>
        <fullName evidence="14">3',5'-cyclic-AMP phosphodiesterase 4B</fullName>
        <ecNumber evidence="5">3.1.4.53</ecNumber>
    </recommendedName>
    <alternativeName>
        <fullName>DPDE4</fullName>
    </alternativeName>
    <alternativeName>
        <fullName evidence="14">cAMP-specific phosphodiesterase 4B</fullName>
    </alternativeName>
</protein>
<organism>
    <name type="scientific">Rattus norvegicus</name>
    <name type="common">Rat</name>
    <dbReference type="NCBI Taxonomy" id="10116"/>
    <lineage>
        <taxon>Eukaryota</taxon>
        <taxon>Metazoa</taxon>
        <taxon>Chordata</taxon>
        <taxon>Craniata</taxon>
        <taxon>Vertebrata</taxon>
        <taxon>Euteleostomi</taxon>
        <taxon>Mammalia</taxon>
        <taxon>Eutheria</taxon>
        <taxon>Euarchontoglires</taxon>
        <taxon>Glires</taxon>
        <taxon>Rodentia</taxon>
        <taxon>Myomorpha</taxon>
        <taxon>Muroidea</taxon>
        <taxon>Muridae</taxon>
        <taxon>Murinae</taxon>
        <taxon>Rattus</taxon>
    </lineage>
</organism>
<keyword id="KW-0025">Alternative splicing</keyword>
<keyword id="KW-0114">cAMP</keyword>
<keyword id="KW-1003">Cell membrane</keyword>
<keyword id="KW-0963">Cytoplasm</keyword>
<keyword id="KW-0378">Hydrolase</keyword>
<keyword id="KW-0460">Magnesium</keyword>
<keyword id="KW-0464">Manganese</keyword>
<keyword id="KW-0472">Membrane</keyword>
<keyword id="KW-0479">Metal-binding</keyword>
<keyword id="KW-0597">Phosphoprotein</keyword>
<keyword id="KW-1185">Reference proteome</keyword>
<keyword id="KW-0862">Zinc</keyword>
<gene>
    <name evidence="16" type="primary">Pde4b</name>
</gene>
<sequence length="736" mass="83375">MKKSRSVMAVTADDNLKDYFECSLSKSYSSSSYTLGIDLWRGRRCCSGNLQLPPLSQRQSERARTPEGDGISRPTTLPLTTLPSIAITTVSQECFDVENGPSPGRSPLDPQASSSSGLVLHAAFPGHSQRRESFLYRSDSDYDLSPKAMSRNSSLPSEQHGDDLIVTPFAQVLASLRIVRNNFTLLTNLHGAPNKRSPAASQAPVTRVSLQEESYQKLAMETLEELDWCLDQLETIQTYRSVSEMASNKFKRMLNRELTHLSEMSRSGNQVSEYISNTFLDKQNDVEIPSPTQKDREKKKKQQLMTQISGVKKLMHSSSLNNTSISRFGVNTENEDHLAKELEDLNKWGLNIFNVAGYSHNRPLTCIMYAIFQERDLLKTFKISSDTFVTYMMTLEDHYHSDVAYHNSLHAADVAQSTHVLLSTPALDAVFTDLEILAAIFAAAIHDVDHPGVSNQFLINTNSELALMYNDESVLENHHLAVGFKLLQEEHCDIFQNLTKKQRQTLRKMVIDMVLATDMSKHMSLLADLKTMVETKKVTSSGVLLLDNYTDRIQVLRNMVHCADLSNPTKSLELYRQWTDRIMEEFFQQGDKERERGMEISPMCDKHTASVEKSQVGFIDYIVHPLWETWADLVQPDAQDILDTLEDNRNWYQSMIPQSPSPPLDERSRDCQGLMEKFQFELTLEEEDSEGPEKEGEGPNYFSSTKTLCVIDPENRDSLEETDIDIATEDKSLIDT</sequence>